<proteinExistence type="inferred from homology"/>
<keyword id="KW-0010">Activator</keyword>
<keyword id="KW-0238">DNA-binding</keyword>
<keyword id="KW-0479">Metal-binding</keyword>
<keyword id="KW-0539">Nucleus</keyword>
<keyword id="KW-1185">Reference proteome</keyword>
<keyword id="KW-0804">Transcription</keyword>
<keyword id="KW-0805">Transcription regulation</keyword>
<keyword id="KW-0862">Zinc</keyword>
<keyword id="KW-0863">Zinc-finger</keyword>
<organism>
    <name type="scientific">Oryza sativa subsp. indica</name>
    <name type="common">Rice</name>
    <dbReference type="NCBI Taxonomy" id="39946"/>
    <lineage>
        <taxon>Eukaryota</taxon>
        <taxon>Viridiplantae</taxon>
        <taxon>Streptophyta</taxon>
        <taxon>Embryophyta</taxon>
        <taxon>Tracheophyta</taxon>
        <taxon>Spermatophyta</taxon>
        <taxon>Magnoliopsida</taxon>
        <taxon>Liliopsida</taxon>
        <taxon>Poales</taxon>
        <taxon>Poaceae</taxon>
        <taxon>BOP clade</taxon>
        <taxon>Oryzoideae</taxon>
        <taxon>Oryzeae</taxon>
        <taxon>Oryzinae</taxon>
        <taxon>Oryza</taxon>
        <taxon>Oryza sativa</taxon>
    </lineage>
</organism>
<reference key="1">
    <citation type="journal article" date="2005" name="PLoS Biol.">
        <title>The genomes of Oryza sativa: a history of duplications.</title>
        <authorList>
            <person name="Yu J."/>
            <person name="Wang J."/>
            <person name="Lin W."/>
            <person name="Li S."/>
            <person name="Li H."/>
            <person name="Zhou J."/>
            <person name="Ni P."/>
            <person name="Dong W."/>
            <person name="Hu S."/>
            <person name="Zeng C."/>
            <person name="Zhang J."/>
            <person name="Zhang Y."/>
            <person name="Li R."/>
            <person name="Xu Z."/>
            <person name="Li S."/>
            <person name="Li X."/>
            <person name="Zheng H."/>
            <person name="Cong L."/>
            <person name="Lin L."/>
            <person name="Yin J."/>
            <person name="Geng J."/>
            <person name="Li G."/>
            <person name="Shi J."/>
            <person name="Liu J."/>
            <person name="Lv H."/>
            <person name="Li J."/>
            <person name="Wang J."/>
            <person name="Deng Y."/>
            <person name="Ran L."/>
            <person name="Shi X."/>
            <person name="Wang X."/>
            <person name="Wu Q."/>
            <person name="Li C."/>
            <person name="Ren X."/>
            <person name="Wang J."/>
            <person name="Wang X."/>
            <person name="Li D."/>
            <person name="Liu D."/>
            <person name="Zhang X."/>
            <person name="Ji Z."/>
            <person name="Zhao W."/>
            <person name="Sun Y."/>
            <person name="Zhang Z."/>
            <person name="Bao J."/>
            <person name="Han Y."/>
            <person name="Dong L."/>
            <person name="Ji J."/>
            <person name="Chen P."/>
            <person name="Wu S."/>
            <person name="Liu J."/>
            <person name="Xiao Y."/>
            <person name="Bu D."/>
            <person name="Tan J."/>
            <person name="Yang L."/>
            <person name="Ye C."/>
            <person name="Zhang J."/>
            <person name="Xu J."/>
            <person name="Zhou Y."/>
            <person name="Yu Y."/>
            <person name="Zhang B."/>
            <person name="Zhuang S."/>
            <person name="Wei H."/>
            <person name="Liu B."/>
            <person name="Lei M."/>
            <person name="Yu H."/>
            <person name="Li Y."/>
            <person name="Xu H."/>
            <person name="Wei S."/>
            <person name="He X."/>
            <person name="Fang L."/>
            <person name="Zhang Z."/>
            <person name="Zhang Y."/>
            <person name="Huang X."/>
            <person name="Su Z."/>
            <person name="Tong W."/>
            <person name="Li J."/>
            <person name="Tong Z."/>
            <person name="Li S."/>
            <person name="Ye J."/>
            <person name="Wang L."/>
            <person name="Fang L."/>
            <person name="Lei T."/>
            <person name="Chen C.-S."/>
            <person name="Chen H.-C."/>
            <person name="Xu Z."/>
            <person name="Li H."/>
            <person name="Huang H."/>
            <person name="Zhang F."/>
            <person name="Xu H."/>
            <person name="Li N."/>
            <person name="Zhao C."/>
            <person name="Li S."/>
            <person name="Dong L."/>
            <person name="Huang Y."/>
            <person name="Li L."/>
            <person name="Xi Y."/>
            <person name="Qi Q."/>
            <person name="Li W."/>
            <person name="Zhang B."/>
            <person name="Hu W."/>
            <person name="Zhang Y."/>
            <person name="Tian X."/>
            <person name="Jiao Y."/>
            <person name="Liang X."/>
            <person name="Jin J."/>
            <person name="Gao L."/>
            <person name="Zheng W."/>
            <person name="Hao B."/>
            <person name="Liu S.-M."/>
            <person name="Wang W."/>
            <person name="Yuan L."/>
            <person name="Cao M."/>
            <person name="McDermott J."/>
            <person name="Samudrala R."/>
            <person name="Wang J."/>
            <person name="Wong G.K.-S."/>
            <person name="Yang H."/>
        </authorList>
    </citation>
    <scope>NUCLEOTIDE SEQUENCE [LARGE SCALE GENOMIC DNA]</scope>
    <source>
        <strain>cv. 93-11</strain>
    </source>
</reference>
<feature type="chain" id="PRO_0000434837" description="GATA transcription factor 19">
    <location>
        <begin position="1"/>
        <end position="271"/>
    </location>
</feature>
<feature type="domain" description="Tify" evidence="4">
    <location>
        <begin position="33"/>
        <end position="68"/>
    </location>
</feature>
<feature type="domain" description="CCT" evidence="3">
    <location>
        <begin position="95"/>
        <end position="137"/>
    </location>
</feature>
<feature type="zinc finger region" description="GATA-type" evidence="2">
    <location>
        <begin position="166"/>
        <end position="193"/>
    </location>
</feature>
<feature type="region of interest" description="Disordered" evidence="5">
    <location>
        <begin position="1"/>
        <end position="23"/>
    </location>
</feature>
<feature type="region of interest" description="Disordered" evidence="5">
    <location>
        <begin position="238"/>
        <end position="271"/>
    </location>
</feature>
<feature type="compositionally biased region" description="Basic and acidic residues" evidence="5">
    <location>
        <begin position="252"/>
        <end position="271"/>
    </location>
</feature>
<accession>B8AR30</accession>
<gene>
    <name evidence="6" type="primary">GATA19</name>
    <name evidence="6" type="synonym">TIFY1B</name>
    <name evidence="7" type="ORF">OsI_13418</name>
</gene>
<evidence type="ECO:0000250" key="1">
    <source>
        <dbReference type="UniProtKB" id="Q8LAU9"/>
    </source>
</evidence>
<evidence type="ECO:0000255" key="2">
    <source>
        <dbReference type="PROSITE-ProRule" id="PRU00094"/>
    </source>
</evidence>
<evidence type="ECO:0000255" key="3">
    <source>
        <dbReference type="PROSITE-ProRule" id="PRU00357"/>
    </source>
</evidence>
<evidence type="ECO:0000255" key="4">
    <source>
        <dbReference type="PROSITE-ProRule" id="PRU00650"/>
    </source>
</evidence>
<evidence type="ECO:0000256" key="5">
    <source>
        <dbReference type="SAM" id="MobiDB-lite"/>
    </source>
</evidence>
<evidence type="ECO:0000305" key="6"/>
<evidence type="ECO:0000312" key="7">
    <source>
        <dbReference type="EMBL" id="EEC76132.1"/>
    </source>
</evidence>
<comment type="function">
    <text evidence="1">Transcriptional activator that specifically binds 5'-GATA-3' or 5'-GAT-3' motifs within gene promoters.</text>
</comment>
<comment type="subcellular location">
    <subcellularLocation>
        <location evidence="3">Nucleus</location>
    </subcellularLocation>
</comment>
<comment type="similarity">
    <text evidence="6">Belongs to the type IV zinc-finger family. Class C subfamily.</text>
</comment>
<dbReference type="EMBL" id="CM000128">
    <property type="protein sequence ID" value="EEC76132.1"/>
    <property type="molecule type" value="Genomic_DNA"/>
</dbReference>
<dbReference type="STRING" id="39946.B8AR30"/>
<dbReference type="EnsemblPlants" id="BGIOSGA009856-TA">
    <property type="protein sequence ID" value="BGIOSGA009856-PA"/>
    <property type="gene ID" value="BGIOSGA009856"/>
</dbReference>
<dbReference type="EnsemblPlants" id="OsGoSa_03g0033400.01">
    <property type="protein sequence ID" value="OsGoSa_03g0033400.01"/>
    <property type="gene ID" value="OsGoSa_03g0033400"/>
</dbReference>
<dbReference type="EnsemblPlants" id="OsIR64_03g0033210.02">
    <property type="protein sequence ID" value="OsIR64_03g0033210.02"/>
    <property type="gene ID" value="OsIR64_03g0033210"/>
</dbReference>
<dbReference type="EnsemblPlants" id="OsKYG_03g0033650.01">
    <property type="protein sequence ID" value="OsKYG_03g0033650.01"/>
    <property type="gene ID" value="OsKYG_03g0033650"/>
</dbReference>
<dbReference type="EnsemblPlants" id="OsLaMu_03g0033410.02">
    <property type="protein sequence ID" value="OsLaMu_03g0033410.02"/>
    <property type="gene ID" value="OsLaMu_03g0033410"/>
</dbReference>
<dbReference type="EnsemblPlants" id="OsLima_03g0033660.01">
    <property type="protein sequence ID" value="OsLima_03g0033660.01"/>
    <property type="gene ID" value="OsLima_03g0033660"/>
</dbReference>
<dbReference type="EnsemblPlants" id="OsLiXu_03g0033400.01">
    <property type="protein sequence ID" value="OsLiXu_03g0033400.01"/>
    <property type="gene ID" value="OsLiXu_03g0033400"/>
</dbReference>
<dbReference type="EnsemblPlants" id="OsPr106_03g0033420.02">
    <property type="protein sequence ID" value="OsPr106_03g0033420.02"/>
    <property type="gene ID" value="OsPr106_03g0033420"/>
</dbReference>
<dbReference type="EnsemblPlants" id="OsZS97_03G033390_02">
    <property type="protein sequence ID" value="OsZS97_03G033390_02"/>
    <property type="gene ID" value="OsZS97_03G033390"/>
</dbReference>
<dbReference type="Gramene" id="BGIOSGA009856-TA">
    <property type="protein sequence ID" value="BGIOSGA009856-PA"/>
    <property type="gene ID" value="BGIOSGA009856"/>
</dbReference>
<dbReference type="Gramene" id="OsGoSa_03g0033400.01">
    <property type="protein sequence ID" value="OsGoSa_03g0033400.01"/>
    <property type="gene ID" value="OsGoSa_03g0033400"/>
</dbReference>
<dbReference type="Gramene" id="OsIR64_03g0033210.02">
    <property type="protein sequence ID" value="OsIR64_03g0033210.02"/>
    <property type="gene ID" value="OsIR64_03g0033210"/>
</dbReference>
<dbReference type="Gramene" id="OsKYG_03g0033650.01">
    <property type="protein sequence ID" value="OsKYG_03g0033650.01"/>
    <property type="gene ID" value="OsKYG_03g0033650"/>
</dbReference>
<dbReference type="Gramene" id="OsLaMu_03g0033410.02">
    <property type="protein sequence ID" value="OsLaMu_03g0033410.02"/>
    <property type="gene ID" value="OsLaMu_03g0033410"/>
</dbReference>
<dbReference type="Gramene" id="OsLima_03g0033660.01">
    <property type="protein sequence ID" value="OsLima_03g0033660.01"/>
    <property type="gene ID" value="OsLima_03g0033660"/>
</dbReference>
<dbReference type="Gramene" id="OsLiXu_03g0033400.01">
    <property type="protein sequence ID" value="OsLiXu_03g0033400.01"/>
    <property type="gene ID" value="OsLiXu_03g0033400"/>
</dbReference>
<dbReference type="Gramene" id="OsPr106_03g0033420.02">
    <property type="protein sequence ID" value="OsPr106_03g0033420.02"/>
    <property type="gene ID" value="OsPr106_03g0033420"/>
</dbReference>
<dbReference type="Gramene" id="OsZS97_03G033390_02">
    <property type="protein sequence ID" value="OsZS97_03G033390_02"/>
    <property type="gene ID" value="OsZS97_03G033390"/>
</dbReference>
<dbReference type="HOGENOM" id="CLU_057264_1_1_1"/>
<dbReference type="OMA" id="PINAPKM"/>
<dbReference type="OrthoDB" id="2162994at2759"/>
<dbReference type="Proteomes" id="UP000007015">
    <property type="component" value="Chromosome 3"/>
</dbReference>
<dbReference type="GO" id="GO:0005634">
    <property type="term" value="C:nucleus"/>
    <property type="evidence" value="ECO:0007669"/>
    <property type="project" value="UniProtKB-SubCell"/>
</dbReference>
<dbReference type="GO" id="GO:0043565">
    <property type="term" value="F:sequence-specific DNA binding"/>
    <property type="evidence" value="ECO:0007669"/>
    <property type="project" value="InterPro"/>
</dbReference>
<dbReference type="GO" id="GO:0008270">
    <property type="term" value="F:zinc ion binding"/>
    <property type="evidence" value="ECO:0007669"/>
    <property type="project" value="UniProtKB-KW"/>
</dbReference>
<dbReference type="GO" id="GO:0006355">
    <property type="term" value="P:regulation of DNA-templated transcription"/>
    <property type="evidence" value="ECO:0007669"/>
    <property type="project" value="InterPro"/>
</dbReference>
<dbReference type="CDD" id="cd00202">
    <property type="entry name" value="ZnF_GATA"/>
    <property type="match status" value="1"/>
</dbReference>
<dbReference type="Gene3D" id="3.30.50.10">
    <property type="entry name" value="Erythroid Transcription Factor GATA-1, subunit A"/>
    <property type="match status" value="1"/>
</dbReference>
<dbReference type="InterPro" id="IPR010402">
    <property type="entry name" value="CCT_domain"/>
</dbReference>
<dbReference type="InterPro" id="IPR045280">
    <property type="entry name" value="TIFY-like"/>
</dbReference>
<dbReference type="InterPro" id="IPR010399">
    <property type="entry name" value="Tify_dom"/>
</dbReference>
<dbReference type="InterPro" id="IPR000679">
    <property type="entry name" value="Znf_GATA"/>
</dbReference>
<dbReference type="InterPro" id="IPR013088">
    <property type="entry name" value="Znf_NHR/GATA"/>
</dbReference>
<dbReference type="PANTHER" id="PTHR46125:SF13">
    <property type="entry name" value="GATA TRANSCRIPTION FACTOR 19"/>
    <property type="match status" value="1"/>
</dbReference>
<dbReference type="PANTHER" id="PTHR46125">
    <property type="entry name" value="GATA TRANSCRIPTION FACTOR 28"/>
    <property type="match status" value="1"/>
</dbReference>
<dbReference type="Pfam" id="PF06203">
    <property type="entry name" value="CCT"/>
    <property type="match status" value="1"/>
</dbReference>
<dbReference type="Pfam" id="PF00320">
    <property type="entry name" value="GATA"/>
    <property type="match status" value="1"/>
</dbReference>
<dbReference type="Pfam" id="PF06200">
    <property type="entry name" value="tify"/>
    <property type="match status" value="1"/>
</dbReference>
<dbReference type="SMART" id="SM00979">
    <property type="entry name" value="TIFY"/>
    <property type="match status" value="1"/>
</dbReference>
<dbReference type="SMART" id="SM00401">
    <property type="entry name" value="ZnF_GATA"/>
    <property type="match status" value="1"/>
</dbReference>
<dbReference type="SUPFAM" id="SSF57716">
    <property type="entry name" value="Glucocorticoid receptor-like (DNA-binding domain)"/>
    <property type="match status" value="1"/>
</dbReference>
<dbReference type="PROSITE" id="PS51017">
    <property type="entry name" value="CCT"/>
    <property type="match status" value="1"/>
</dbReference>
<dbReference type="PROSITE" id="PS00344">
    <property type="entry name" value="GATA_ZN_FINGER_1"/>
    <property type="match status" value="1"/>
</dbReference>
<dbReference type="PROSITE" id="PS51320">
    <property type="entry name" value="TIFY"/>
    <property type="match status" value="1"/>
</dbReference>
<protein>
    <recommendedName>
        <fullName evidence="6">GATA transcription factor 19</fullName>
    </recommendedName>
    <alternativeName>
        <fullName evidence="6">Protein TIFY 1b</fullName>
    </alternativeName>
</protein>
<sequence length="271" mass="29042">MAAEPPADGRDPPADDGAAGDGAVESAAAEALLSAASEQLTLVYQGEVYVFDPVPPQKVQAVLLVLGGSDMPPGLVSMAVPTTFDEKSTTVAARRIASLMRFREKRKERCFDKKIRYSVRKEVAQKMKRRKGQFAGRADFGDGSCSSAPCGSTANGEDDHIRETHCQNCGISSRLTPAMRRGPAGPRSLCNACGLMWANKGTLRSPLNAPKMTVQHPADLSKTGDTDDSKANLCAEHNQTTMKTDTEMVPEQEQKADVLPPTKEEDSMATS</sequence>
<name>GAT19_ORYSI</name>